<protein>
    <recommendedName>
        <fullName evidence="1">6,7-dimethyl-8-ribityllumazine synthase</fullName>
        <shortName evidence="1">DMRL synthase</shortName>
        <shortName evidence="1">LS</shortName>
        <shortName evidence="1">Lumazine synthase</shortName>
        <ecNumber evidence="1">2.5.1.78</ecNumber>
    </recommendedName>
</protein>
<feature type="chain" id="PRO_0000134845" description="6,7-dimethyl-8-ribityllumazine synthase">
    <location>
        <begin position="1"/>
        <end position="134"/>
    </location>
</feature>
<feature type="active site" description="Proton donor" evidence="1">
    <location>
        <position position="76"/>
    </location>
</feature>
<feature type="binding site" evidence="1">
    <location>
        <position position="12"/>
    </location>
    <ligand>
        <name>5-amino-6-(D-ribitylamino)uracil</name>
        <dbReference type="ChEBI" id="CHEBI:15934"/>
    </ligand>
</feature>
<feature type="binding site" evidence="1">
    <location>
        <begin position="44"/>
        <end position="46"/>
    </location>
    <ligand>
        <name>5-amino-6-(D-ribitylamino)uracil</name>
        <dbReference type="ChEBI" id="CHEBI:15934"/>
    </ligand>
</feature>
<feature type="binding site" evidence="1">
    <location>
        <begin position="68"/>
        <end position="70"/>
    </location>
    <ligand>
        <name>5-amino-6-(D-ribitylamino)uracil</name>
        <dbReference type="ChEBI" id="CHEBI:15934"/>
    </ligand>
</feature>
<feature type="binding site" evidence="1">
    <location>
        <begin position="73"/>
        <end position="74"/>
    </location>
    <ligand>
        <name>(2S)-2-hydroxy-3-oxobutyl phosphate</name>
        <dbReference type="ChEBI" id="CHEBI:58830"/>
    </ligand>
</feature>
<feature type="binding site" evidence="1">
    <location>
        <position position="101"/>
    </location>
    <ligand>
        <name>5-amino-6-(D-ribitylamino)uracil</name>
        <dbReference type="ChEBI" id="CHEBI:15934"/>
    </ligand>
</feature>
<feature type="binding site" evidence="1">
    <location>
        <position position="116"/>
    </location>
    <ligand>
        <name>(2S)-2-hydroxy-3-oxobutyl phosphate</name>
        <dbReference type="ChEBI" id="CHEBI:58830"/>
    </ligand>
</feature>
<dbReference type="EC" id="2.5.1.78" evidence="1"/>
<dbReference type="EMBL" id="AE008384">
    <property type="protein sequence ID" value="AAM29940.1"/>
    <property type="molecule type" value="Genomic_DNA"/>
</dbReference>
<dbReference type="RefSeq" id="WP_011032198.1">
    <property type="nucleotide sequence ID" value="NC_003901.1"/>
</dbReference>
<dbReference type="SMR" id="Q8Q093"/>
<dbReference type="GeneID" id="82159241"/>
<dbReference type="KEGG" id="mma:MM_0244"/>
<dbReference type="PATRIC" id="fig|192952.21.peg.296"/>
<dbReference type="eggNOG" id="arCOG01323">
    <property type="taxonomic scope" value="Archaea"/>
</dbReference>
<dbReference type="HOGENOM" id="CLU_089358_3_1_2"/>
<dbReference type="BRENDA" id="2.5.1.78">
    <property type="organism ID" value="3270"/>
</dbReference>
<dbReference type="UniPathway" id="UPA00275">
    <property type="reaction ID" value="UER00404"/>
</dbReference>
<dbReference type="Proteomes" id="UP000000595">
    <property type="component" value="Chromosome"/>
</dbReference>
<dbReference type="GO" id="GO:0009349">
    <property type="term" value="C:riboflavin synthase complex"/>
    <property type="evidence" value="ECO:0007669"/>
    <property type="project" value="InterPro"/>
</dbReference>
<dbReference type="GO" id="GO:0000906">
    <property type="term" value="F:6,7-dimethyl-8-ribityllumazine synthase activity"/>
    <property type="evidence" value="ECO:0007669"/>
    <property type="project" value="UniProtKB-UniRule"/>
</dbReference>
<dbReference type="GO" id="GO:0009231">
    <property type="term" value="P:riboflavin biosynthetic process"/>
    <property type="evidence" value="ECO:0007669"/>
    <property type="project" value="UniProtKB-UniRule"/>
</dbReference>
<dbReference type="CDD" id="cd09211">
    <property type="entry name" value="Lumazine_synthase_archaeal"/>
    <property type="match status" value="1"/>
</dbReference>
<dbReference type="FunFam" id="3.40.50.960:FF:000003">
    <property type="entry name" value="6,7-dimethyl-8-ribityllumazine synthase"/>
    <property type="match status" value="1"/>
</dbReference>
<dbReference type="Gene3D" id="3.40.50.960">
    <property type="entry name" value="Lumazine/riboflavin synthase"/>
    <property type="match status" value="1"/>
</dbReference>
<dbReference type="HAMAP" id="MF_00178">
    <property type="entry name" value="Lumazine_synth"/>
    <property type="match status" value="1"/>
</dbReference>
<dbReference type="InterPro" id="IPR034964">
    <property type="entry name" value="LS"/>
</dbReference>
<dbReference type="InterPro" id="IPR002180">
    <property type="entry name" value="LS/RS"/>
</dbReference>
<dbReference type="InterPro" id="IPR036467">
    <property type="entry name" value="LS/RS_sf"/>
</dbReference>
<dbReference type="NCBIfam" id="TIGR00114">
    <property type="entry name" value="lumazine-synth"/>
    <property type="match status" value="1"/>
</dbReference>
<dbReference type="PANTHER" id="PTHR21058:SF0">
    <property type="entry name" value="6,7-DIMETHYL-8-RIBITYLLUMAZINE SYNTHASE"/>
    <property type="match status" value="1"/>
</dbReference>
<dbReference type="PANTHER" id="PTHR21058">
    <property type="entry name" value="6,7-DIMETHYL-8-RIBITYLLUMAZINE SYNTHASE DMRL SYNTHASE LUMAZINE SYNTHASE"/>
    <property type="match status" value="1"/>
</dbReference>
<dbReference type="Pfam" id="PF00885">
    <property type="entry name" value="DMRL_synthase"/>
    <property type="match status" value="1"/>
</dbReference>
<dbReference type="SUPFAM" id="SSF52121">
    <property type="entry name" value="Lumazine synthase"/>
    <property type="match status" value="1"/>
</dbReference>
<evidence type="ECO:0000255" key="1">
    <source>
        <dbReference type="HAMAP-Rule" id="MF_00178"/>
    </source>
</evidence>
<reference key="1">
    <citation type="journal article" date="2002" name="J. Mol. Microbiol. Biotechnol.">
        <title>The genome of Methanosarcina mazei: evidence for lateral gene transfer between Bacteria and Archaea.</title>
        <authorList>
            <person name="Deppenmeier U."/>
            <person name="Johann A."/>
            <person name="Hartsch T."/>
            <person name="Merkl R."/>
            <person name="Schmitz R.A."/>
            <person name="Martinez-Arias R."/>
            <person name="Henne A."/>
            <person name="Wiezer A."/>
            <person name="Baeumer S."/>
            <person name="Jacobi C."/>
            <person name="Brueggemann H."/>
            <person name="Lienard T."/>
            <person name="Christmann A."/>
            <person name="Boemecke M."/>
            <person name="Steckel S."/>
            <person name="Bhattacharyya A."/>
            <person name="Lykidis A."/>
            <person name="Overbeek R."/>
            <person name="Klenk H.-P."/>
            <person name="Gunsalus R.P."/>
            <person name="Fritz H.-J."/>
            <person name="Gottschalk G."/>
        </authorList>
    </citation>
    <scope>NUCLEOTIDE SEQUENCE [LARGE SCALE GENOMIC DNA]</scope>
    <source>
        <strain>ATCC BAA-159 / DSM 3647 / Goe1 / Go1 / JCM 11833 / OCM 88</strain>
    </source>
</reference>
<keyword id="KW-0686">Riboflavin biosynthesis</keyword>
<keyword id="KW-0808">Transferase</keyword>
<proteinExistence type="inferred from homology"/>
<gene>
    <name evidence="1" type="primary">ribH</name>
    <name type="ordered locus">MM_0244</name>
</gene>
<sequence>MTISLGFVVAEFNRDLTYQMELLGREHAEFLGATVKETILVPGVFDMPLAIKKLCQREDIDAVVTIGSVIEGETDHDQVVMQHAARKIMDLSLEFNKPVTLGIPGPGMTRMAAHERVDYAKRAVEAAVKLVRRL</sequence>
<comment type="function">
    <text evidence="1">Catalyzes the formation of 6,7-dimethyl-8-ribityllumazine by condensation of 5-amino-6-(D-ribitylamino)uracil with 3,4-dihydroxy-2-butanone 4-phosphate. This is the penultimate step in the biosynthesis of riboflavin.</text>
</comment>
<comment type="catalytic activity">
    <reaction evidence="1">
        <text>(2S)-2-hydroxy-3-oxobutyl phosphate + 5-amino-6-(D-ribitylamino)uracil = 6,7-dimethyl-8-(1-D-ribityl)lumazine + phosphate + 2 H2O + H(+)</text>
        <dbReference type="Rhea" id="RHEA:26152"/>
        <dbReference type="ChEBI" id="CHEBI:15377"/>
        <dbReference type="ChEBI" id="CHEBI:15378"/>
        <dbReference type="ChEBI" id="CHEBI:15934"/>
        <dbReference type="ChEBI" id="CHEBI:43474"/>
        <dbReference type="ChEBI" id="CHEBI:58201"/>
        <dbReference type="ChEBI" id="CHEBI:58830"/>
        <dbReference type="EC" id="2.5.1.78"/>
    </reaction>
</comment>
<comment type="pathway">
    <text evidence="1">Cofactor biosynthesis; riboflavin biosynthesis; riboflavin from 2-hydroxy-3-oxobutyl phosphate and 5-amino-6-(D-ribitylamino)uracil: step 1/2.</text>
</comment>
<comment type="similarity">
    <text evidence="1">Belongs to the DMRL synthase family.</text>
</comment>
<accession>Q8Q093</accession>
<name>RISB_METMA</name>
<organism>
    <name type="scientific">Methanosarcina mazei (strain ATCC BAA-159 / DSM 3647 / Goe1 / Go1 / JCM 11833 / OCM 88)</name>
    <name type="common">Methanosarcina frisia</name>
    <dbReference type="NCBI Taxonomy" id="192952"/>
    <lineage>
        <taxon>Archaea</taxon>
        <taxon>Methanobacteriati</taxon>
        <taxon>Methanobacteriota</taxon>
        <taxon>Stenosarchaea group</taxon>
        <taxon>Methanomicrobia</taxon>
        <taxon>Methanosarcinales</taxon>
        <taxon>Methanosarcinaceae</taxon>
        <taxon>Methanosarcina</taxon>
    </lineage>
</organism>